<evidence type="ECO:0000255" key="1">
    <source>
        <dbReference type="HAMAP-Rule" id="MF_00168"/>
    </source>
</evidence>
<proteinExistence type="inferred from homology"/>
<gene>
    <name evidence="1" type="primary">tgt</name>
    <name type="ordered locus">FTF1120c</name>
</gene>
<reference key="1">
    <citation type="journal article" date="2007" name="PLoS ONE">
        <title>Genome sequencing shows that European isolates of Francisella tularensis subspecies tularensis are almost identical to US laboratory strain Schu S4.</title>
        <authorList>
            <person name="Chaudhuri R.R."/>
            <person name="Ren C.-P."/>
            <person name="Desmond L."/>
            <person name="Vincent G.A."/>
            <person name="Silman N.J."/>
            <person name="Brehm J.K."/>
            <person name="Elmore M.J."/>
            <person name="Hudson M.J."/>
            <person name="Forsman M."/>
            <person name="Isherwood K.E."/>
            <person name="Gurycova D."/>
            <person name="Minton N.P."/>
            <person name="Titball R.W."/>
            <person name="Pallen M.J."/>
            <person name="Vipond R."/>
        </authorList>
    </citation>
    <scope>NUCLEOTIDE SEQUENCE [LARGE SCALE GENOMIC DNA]</scope>
    <source>
        <strain>FSC 198</strain>
    </source>
</reference>
<protein>
    <recommendedName>
        <fullName evidence="1">Queuine tRNA-ribosyltransferase</fullName>
        <ecNumber evidence="1">2.4.2.29</ecNumber>
    </recommendedName>
    <alternativeName>
        <fullName evidence="1">Guanine insertion enzyme</fullName>
    </alternativeName>
    <alternativeName>
        <fullName evidence="1">tRNA-guanine transglycosylase</fullName>
    </alternativeName>
</protein>
<feature type="chain" id="PRO_1000016790" description="Queuine tRNA-ribosyltransferase">
    <location>
        <begin position="1"/>
        <end position="367"/>
    </location>
</feature>
<feature type="region of interest" description="RNA binding" evidence="1">
    <location>
        <begin position="246"/>
        <end position="252"/>
    </location>
</feature>
<feature type="active site" description="Proton acceptor" evidence="1">
    <location>
        <position position="92"/>
    </location>
</feature>
<feature type="active site" description="Nucleophile" evidence="1">
    <location>
        <position position="265"/>
    </location>
</feature>
<feature type="binding site" evidence="1">
    <location>
        <begin position="92"/>
        <end position="96"/>
    </location>
    <ligand>
        <name>substrate</name>
    </ligand>
</feature>
<feature type="binding site" evidence="1">
    <location>
        <position position="146"/>
    </location>
    <ligand>
        <name>substrate</name>
    </ligand>
</feature>
<feature type="binding site" evidence="1">
    <location>
        <position position="188"/>
    </location>
    <ligand>
        <name>substrate</name>
    </ligand>
</feature>
<feature type="binding site" evidence="1">
    <location>
        <position position="215"/>
    </location>
    <ligand>
        <name>substrate</name>
    </ligand>
</feature>
<feature type="binding site" evidence="1">
    <location>
        <position position="303"/>
    </location>
    <ligand>
        <name>Zn(2+)</name>
        <dbReference type="ChEBI" id="CHEBI:29105"/>
    </ligand>
</feature>
<feature type="binding site" evidence="1">
    <location>
        <position position="305"/>
    </location>
    <ligand>
        <name>Zn(2+)</name>
        <dbReference type="ChEBI" id="CHEBI:29105"/>
    </ligand>
</feature>
<feature type="binding site" evidence="1">
    <location>
        <position position="308"/>
    </location>
    <ligand>
        <name>Zn(2+)</name>
        <dbReference type="ChEBI" id="CHEBI:29105"/>
    </ligand>
</feature>
<feature type="binding site" evidence="1">
    <location>
        <position position="334"/>
    </location>
    <ligand>
        <name>Zn(2+)</name>
        <dbReference type="ChEBI" id="CHEBI:29105"/>
    </ligand>
</feature>
<organism>
    <name type="scientific">Francisella tularensis subsp. tularensis (strain FSC 198)</name>
    <dbReference type="NCBI Taxonomy" id="393115"/>
    <lineage>
        <taxon>Bacteria</taxon>
        <taxon>Pseudomonadati</taxon>
        <taxon>Pseudomonadota</taxon>
        <taxon>Gammaproteobacteria</taxon>
        <taxon>Thiotrichales</taxon>
        <taxon>Francisellaceae</taxon>
        <taxon>Francisella</taxon>
    </lineage>
</organism>
<accession>Q14HA0</accession>
<sequence>MTVMKFDLIKKEGKARRGKITFPRGDIQTPAFMPVGTYGAVKSLSPVELKEMGAEIILGNTFHLWLRPGTEIIKKHGSLHGFNGWDKPILTDSGGFQVFSLGKMRKLTEEGVTFKSPINSSKVFLSPEISMQVQRDLGSDIVMCFDECTPYPATEKEAKESMELSMRWAKRSKEAHGDNPSALFGIIQGGMYEHLRDESLAKLKEIDFDGFAIGGLSVGEPKEDMIRILDHTAHQMPEDKPRYLMGVGTPKDLVEAVYRGVDMFDCVMPSRNARNGHIFTSEGVIKIRNSKYKDDTSPLDPNCDCYTCKNFTKSYLHHLDKTKEILGSRLNTIHNLTFYQNLMKSIRKALDEGRFSEFRKEFLASYK</sequence>
<dbReference type="EC" id="2.4.2.29" evidence="1"/>
<dbReference type="EMBL" id="AM286280">
    <property type="protein sequence ID" value="CAL09136.1"/>
    <property type="molecule type" value="Genomic_DNA"/>
</dbReference>
<dbReference type="RefSeq" id="WP_003021291.1">
    <property type="nucleotide sequence ID" value="NC_008245.1"/>
</dbReference>
<dbReference type="SMR" id="Q14HA0"/>
<dbReference type="KEGG" id="ftf:FTF1120c"/>
<dbReference type="HOGENOM" id="CLU_022060_0_1_6"/>
<dbReference type="UniPathway" id="UPA00392"/>
<dbReference type="GO" id="GO:0005829">
    <property type="term" value="C:cytosol"/>
    <property type="evidence" value="ECO:0007669"/>
    <property type="project" value="TreeGrafter"/>
</dbReference>
<dbReference type="GO" id="GO:0046872">
    <property type="term" value="F:metal ion binding"/>
    <property type="evidence" value="ECO:0007669"/>
    <property type="project" value="UniProtKB-KW"/>
</dbReference>
<dbReference type="GO" id="GO:0008479">
    <property type="term" value="F:tRNA-guanosine(34) queuine transglycosylase activity"/>
    <property type="evidence" value="ECO:0007669"/>
    <property type="project" value="UniProtKB-UniRule"/>
</dbReference>
<dbReference type="GO" id="GO:0008616">
    <property type="term" value="P:queuosine biosynthetic process"/>
    <property type="evidence" value="ECO:0007669"/>
    <property type="project" value="UniProtKB-UniRule"/>
</dbReference>
<dbReference type="GO" id="GO:0002099">
    <property type="term" value="P:tRNA wobble guanine modification"/>
    <property type="evidence" value="ECO:0007669"/>
    <property type="project" value="TreeGrafter"/>
</dbReference>
<dbReference type="GO" id="GO:0101030">
    <property type="term" value="P:tRNA-guanine transglycosylation"/>
    <property type="evidence" value="ECO:0007669"/>
    <property type="project" value="InterPro"/>
</dbReference>
<dbReference type="FunFam" id="3.20.20.105:FF:000001">
    <property type="entry name" value="Queuine tRNA-ribosyltransferase"/>
    <property type="match status" value="1"/>
</dbReference>
<dbReference type="Gene3D" id="3.20.20.105">
    <property type="entry name" value="Queuine tRNA-ribosyltransferase-like"/>
    <property type="match status" value="1"/>
</dbReference>
<dbReference type="HAMAP" id="MF_00168">
    <property type="entry name" value="Q_tRNA_Tgt"/>
    <property type="match status" value="1"/>
</dbReference>
<dbReference type="InterPro" id="IPR050076">
    <property type="entry name" value="ArchSynthase1/Queuine_TRR"/>
</dbReference>
<dbReference type="InterPro" id="IPR004803">
    <property type="entry name" value="TGT"/>
</dbReference>
<dbReference type="InterPro" id="IPR036511">
    <property type="entry name" value="TGT-like_sf"/>
</dbReference>
<dbReference type="InterPro" id="IPR002616">
    <property type="entry name" value="tRNA_ribo_trans-like"/>
</dbReference>
<dbReference type="NCBIfam" id="TIGR00430">
    <property type="entry name" value="Q_tRNA_tgt"/>
    <property type="match status" value="1"/>
</dbReference>
<dbReference type="NCBIfam" id="TIGR00449">
    <property type="entry name" value="tgt_general"/>
    <property type="match status" value="1"/>
</dbReference>
<dbReference type="PANTHER" id="PTHR46499">
    <property type="entry name" value="QUEUINE TRNA-RIBOSYLTRANSFERASE"/>
    <property type="match status" value="1"/>
</dbReference>
<dbReference type="PANTHER" id="PTHR46499:SF1">
    <property type="entry name" value="QUEUINE TRNA-RIBOSYLTRANSFERASE"/>
    <property type="match status" value="1"/>
</dbReference>
<dbReference type="Pfam" id="PF01702">
    <property type="entry name" value="TGT"/>
    <property type="match status" value="1"/>
</dbReference>
<dbReference type="SUPFAM" id="SSF51713">
    <property type="entry name" value="tRNA-guanine transglycosylase"/>
    <property type="match status" value="1"/>
</dbReference>
<keyword id="KW-0328">Glycosyltransferase</keyword>
<keyword id="KW-0479">Metal-binding</keyword>
<keyword id="KW-0671">Queuosine biosynthesis</keyword>
<keyword id="KW-0808">Transferase</keyword>
<keyword id="KW-0819">tRNA processing</keyword>
<keyword id="KW-0862">Zinc</keyword>
<name>TGT_FRAT1</name>
<comment type="function">
    <text evidence="1">Catalyzes the base-exchange of a guanine (G) residue with the queuine precursor 7-aminomethyl-7-deazaguanine (PreQ1) at position 34 (anticodon wobble position) in tRNAs with GU(N) anticodons (tRNA-Asp, -Asn, -His and -Tyr). Catalysis occurs through a double-displacement mechanism. The nucleophile active site attacks the C1' of nucleotide 34 to detach the guanine base from the RNA, forming a covalent enzyme-RNA intermediate. The proton acceptor active site deprotonates the incoming PreQ1, allowing a nucleophilic attack on the C1' of the ribose to form the product. After dissociation, two additional enzymatic reactions on the tRNA convert PreQ1 to queuine (Q), resulting in the hypermodified nucleoside queuosine (7-(((4,5-cis-dihydroxy-2-cyclopenten-1-yl)amino)methyl)-7-deazaguanosine).</text>
</comment>
<comment type="catalytic activity">
    <reaction evidence="1">
        <text>7-aminomethyl-7-carbaguanine + guanosine(34) in tRNA = 7-aminomethyl-7-carbaguanosine(34) in tRNA + guanine</text>
        <dbReference type="Rhea" id="RHEA:24104"/>
        <dbReference type="Rhea" id="RHEA-COMP:10341"/>
        <dbReference type="Rhea" id="RHEA-COMP:10342"/>
        <dbReference type="ChEBI" id="CHEBI:16235"/>
        <dbReference type="ChEBI" id="CHEBI:58703"/>
        <dbReference type="ChEBI" id="CHEBI:74269"/>
        <dbReference type="ChEBI" id="CHEBI:82833"/>
        <dbReference type="EC" id="2.4.2.29"/>
    </reaction>
</comment>
<comment type="cofactor">
    <cofactor evidence="1">
        <name>Zn(2+)</name>
        <dbReference type="ChEBI" id="CHEBI:29105"/>
    </cofactor>
    <text evidence="1">Binds 1 zinc ion per subunit.</text>
</comment>
<comment type="pathway">
    <text evidence="1">tRNA modification; tRNA-queuosine biosynthesis.</text>
</comment>
<comment type="subunit">
    <text evidence="1">Homodimer. Within each dimer, one monomer is responsible for RNA recognition and catalysis, while the other monomer binds to the replacement base PreQ1.</text>
</comment>
<comment type="similarity">
    <text evidence="1">Belongs to the queuine tRNA-ribosyltransferase family.</text>
</comment>